<name>YIDD_STAAT</name>
<proteinExistence type="inferred from homology"/>
<accession>A8Z4L7</accession>
<dbReference type="EMBL" id="CP000730">
    <property type="protein sequence ID" value="ABX29787.1"/>
    <property type="molecule type" value="Genomic_DNA"/>
</dbReference>
<dbReference type="KEGG" id="sax:USA300HOU_1782"/>
<dbReference type="HOGENOM" id="CLU_144811_6_0_9"/>
<dbReference type="BioCyc" id="SAUR451516-HMP:GTV5-1802-MONOMER"/>
<dbReference type="GO" id="GO:0005886">
    <property type="term" value="C:plasma membrane"/>
    <property type="evidence" value="ECO:0007669"/>
    <property type="project" value="UniProtKB-SubCell"/>
</dbReference>
<dbReference type="HAMAP" id="MF_00386">
    <property type="entry name" value="UPF0161_YidD"/>
    <property type="match status" value="1"/>
</dbReference>
<dbReference type="InterPro" id="IPR002696">
    <property type="entry name" value="Membr_insert_effic_factor_YidD"/>
</dbReference>
<dbReference type="NCBIfam" id="TIGR00278">
    <property type="entry name" value="membrane protein insertion efficiency factor YidD"/>
    <property type="match status" value="1"/>
</dbReference>
<dbReference type="PANTHER" id="PTHR33383">
    <property type="entry name" value="MEMBRANE PROTEIN INSERTION EFFICIENCY FACTOR-RELATED"/>
    <property type="match status" value="1"/>
</dbReference>
<dbReference type="PANTHER" id="PTHR33383:SF1">
    <property type="entry name" value="MEMBRANE PROTEIN INSERTION EFFICIENCY FACTOR-RELATED"/>
    <property type="match status" value="1"/>
</dbReference>
<dbReference type="Pfam" id="PF01809">
    <property type="entry name" value="YidD"/>
    <property type="match status" value="1"/>
</dbReference>
<dbReference type="SMART" id="SM01234">
    <property type="entry name" value="Haemolytic"/>
    <property type="match status" value="1"/>
</dbReference>
<reference key="1">
    <citation type="journal article" date="2007" name="BMC Microbiol.">
        <title>Subtle genetic changes enhance virulence of methicillin resistant and sensitive Staphylococcus aureus.</title>
        <authorList>
            <person name="Highlander S.K."/>
            <person name="Hulten K.G."/>
            <person name="Qin X."/>
            <person name="Jiang H."/>
            <person name="Yerrapragada S."/>
            <person name="Mason E.O. Jr."/>
            <person name="Shang Y."/>
            <person name="Williams T.M."/>
            <person name="Fortunov R.M."/>
            <person name="Liu Y."/>
            <person name="Igboeli O."/>
            <person name="Petrosino J."/>
            <person name="Tirumalai M."/>
            <person name="Uzman A."/>
            <person name="Fox G.E."/>
            <person name="Cardenas A.M."/>
            <person name="Muzny D.M."/>
            <person name="Hemphill L."/>
            <person name="Ding Y."/>
            <person name="Dugan S."/>
            <person name="Blyth P.R."/>
            <person name="Buhay C.J."/>
            <person name="Dinh H.H."/>
            <person name="Hawes A.C."/>
            <person name="Holder M."/>
            <person name="Kovar C.L."/>
            <person name="Lee S.L."/>
            <person name="Liu W."/>
            <person name="Nazareth L.V."/>
            <person name="Wang Q."/>
            <person name="Zhou J."/>
            <person name="Kaplan S.L."/>
            <person name="Weinstock G.M."/>
        </authorList>
    </citation>
    <scope>NUCLEOTIDE SEQUENCE [LARGE SCALE GENOMIC DNA]</scope>
    <source>
        <strain>USA300 / TCH1516</strain>
    </source>
</reference>
<evidence type="ECO:0000255" key="1">
    <source>
        <dbReference type="HAMAP-Rule" id="MF_00386"/>
    </source>
</evidence>
<evidence type="ECO:0000256" key="2">
    <source>
        <dbReference type="SAM" id="MobiDB-lite"/>
    </source>
</evidence>
<feature type="chain" id="PRO_1000080201" description="Putative membrane protein insertion efficiency factor">
    <location>
        <begin position="1"/>
        <end position="85"/>
    </location>
</feature>
<feature type="region of interest" description="Disordered" evidence="2">
    <location>
        <begin position="62"/>
        <end position="85"/>
    </location>
</feature>
<keyword id="KW-1003">Cell membrane</keyword>
<keyword id="KW-0472">Membrane</keyword>
<comment type="function">
    <text evidence="1">Could be involved in insertion of integral membrane proteins into the membrane.</text>
</comment>
<comment type="subcellular location">
    <subcellularLocation>
        <location evidence="1">Cell membrane</location>
        <topology evidence="1">Peripheral membrane protein</topology>
        <orientation evidence="1">Cytoplasmic side</orientation>
    </subcellularLocation>
</comment>
<comment type="similarity">
    <text evidence="1">Belongs to the UPF0161 family.</text>
</comment>
<sequence>MKKIFLAMIHFYQRFISPLTPPTCRFYPTCSEYTREAIQYHGAFKGLYLGIRRILKCHPLHKGGFDPVPLKKDKSASKHSHKHNH</sequence>
<organism>
    <name type="scientific">Staphylococcus aureus (strain USA300 / TCH1516)</name>
    <dbReference type="NCBI Taxonomy" id="451516"/>
    <lineage>
        <taxon>Bacteria</taxon>
        <taxon>Bacillati</taxon>
        <taxon>Bacillota</taxon>
        <taxon>Bacilli</taxon>
        <taxon>Bacillales</taxon>
        <taxon>Staphylococcaceae</taxon>
        <taxon>Staphylococcus</taxon>
    </lineage>
</organism>
<protein>
    <recommendedName>
        <fullName evidence="1">Putative membrane protein insertion efficiency factor</fullName>
    </recommendedName>
</protein>
<gene>
    <name type="ordered locus">USA300HOU_1782</name>
</gene>